<evidence type="ECO:0000255" key="1">
    <source>
        <dbReference type="HAMAP-Rule" id="MF_00671"/>
    </source>
</evidence>
<evidence type="ECO:0000269" key="2">
    <source>
    </source>
</evidence>
<evidence type="ECO:0000269" key="3">
    <source>
    </source>
</evidence>
<evidence type="ECO:0000269" key="4">
    <source>
    </source>
</evidence>
<evidence type="ECO:0000269" key="5">
    <source>
    </source>
</evidence>
<evidence type="ECO:0000269" key="6">
    <source>
    </source>
</evidence>
<evidence type="ECO:0000269" key="7">
    <source>
    </source>
</evidence>
<evidence type="ECO:0000269" key="8">
    <source>
    </source>
</evidence>
<evidence type="ECO:0000269" key="9">
    <source>
    </source>
</evidence>
<evidence type="ECO:0000269" key="10">
    <source>
    </source>
</evidence>
<evidence type="ECO:0000269" key="11">
    <source>
    </source>
</evidence>
<evidence type="ECO:0000269" key="12">
    <source>
    </source>
</evidence>
<evidence type="ECO:0000269" key="13">
    <source>
    </source>
</evidence>
<evidence type="ECO:0000269" key="14">
    <source>
    </source>
</evidence>
<evidence type="ECO:0000269" key="15">
    <source ref="7"/>
</evidence>
<evidence type="ECO:0000303" key="16">
    <source>
    </source>
</evidence>
<evidence type="ECO:0000305" key="17"/>
<evidence type="ECO:0000305" key="18">
    <source>
    </source>
</evidence>
<evidence type="ECO:0000305" key="19">
    <source>
    </source>
</evidence>
<evidence type="ECO:0000305" key="20">
    <source>
    </source>
</evidence>
<evidence type="ECO:0000305" key="21">
    <source>
    </source>
</evidence>
<evidence type="ECO:0007744" key="22">
    <source>
        <dbReference type="PDB" id="1C5K"/>
    </source>
</evidence>
<evidence type="ECO:0007744" key="23">
    <source>
        <dbReference type="PDB" id="1CRZ"/>
    </source>
</evidence>
<evidence type="ECO:0007744" key="24">
    <source>
        <dbReference type="PDB" id="2HQS"/>
    </source>
</evidence>
<evidence type="ECO:0007744" key="25">
    <source>
        <dbReference type="PDB" id="2IVZ"/>
    </source>
</evidence>
<evidence type="ECO:0007744" key="26">
    <source>
        <dbReference type="PDB" id="2W8B"/>
    </source>
</evidence>
<evidence type="ECO:0007829" key="27">
    <source>
        <dbReference type="PDB" id="1CRZ"/>
    </source>
</evidence>
<evidence type="ECO:0007829" key="28">
    <source>
        <dbReference type="PDB" id="2HQS"/>
    </source>
</evidence>
<keyword id="KW-0002">3D-structure</keyword>
<keyword id="KW-0131">Cell cycle</keyword>
<keyword id="KW-0132">Cell division</keyword>
<keyword id="KW-0903">Direct protein sequencing</keyword>
<keyword id="KW-0574">Periplasm</keyword>
<keyword id="KW-1185">Reference proteome</keyword>
<keyword id="KW-0732">Signal</keyword>
<organism>
    <name type="scientific">Escherichia coli (strain K12)</name>
    <dbReference type="NCBI Taxonomy" id="83333"/>
    <lineage>
        <taxon>Bacteria</taxon>
        <taxon>Pseudomonadati</taxon>
        <taxon>Pseudomonadota</taxon>
        <taxon>Gammaproteobacteria</taxon>
        <taxon>Enterobacterales</taxon>
        <taxon>Enterobacteriaceae</taxon>
        <taxon>Escherichia</taxon>
    </lineage>
</organism>
<feature type="signal peptide" evidence="1 12 15">
    <location>
        <begin position="1"/>
        <end position="21"/>
    </location>
</feature>
<feature type="chain" id="PRO_0000034647" description="Tol-Pal system protein TolB" evidence="1">
    <location>
        <begin position="22"/>
        <end position="430"/>
    </location>
</feature>
<feature type="region of interest" description="TolA box" evidence="19">
    <location>
        <begin position="22"/>
        <end position="34"/>
    </location>
</feature>
<feature type="strand" evidence="28">
    <location>
        <begin position="26"/>
        <end position="29"/>
    </location>
</feature>
<feature type="strand" evidence="27">
    <location>
        <begin position="31"/>
        <end position="33"/>
    </location>
</feature>
<feature type="strand" evidence="28">
    <location>
        <begin position="34"/>
        <end position="39"/>
    </location>
</feature>
<feature type="strand" evidence="28">
    <location>
        <begin position="43"/>
        <end position="49"/>
    </location>
</feature>
<feature type="helix" evidence="28">
    <location>
        <begin position="54"/>
        <end position="64"/>
    </location>
</feature>
<feature type="strand" evidence="28">
    <location>
        <begin position="67"/>
        <end position="70"/>
    </location>
</feature>
<feature type="helix" evidence="28">
    <location>
        <begin position="73"/>
        <end position="75"/>
    </location>
</feature>
<feature type="helix" evidence="28">
    <location>
        <begin position="83"/>
        <end position="85"/>
    </location>
</feature>
<feature type="helix" evidence="28">
    <location>
        <begin position="88"/>
        <end position="92"/>
    </location>
</feature>
<feature type="turn" evidence="28">
    <location>
        <begin position="93"/>
        <end position="95"/>
    </location>
</feature>
<feature type="strand" evidence="28">
    <location>
        <begin position="98"/>
        <end position="106"/>
    </location>
</feature>
<feature type="strand" evidence="28">
    <location>
        <begin position="112"/>
        <end position="120"/>
    </location>
</feature>
<feature type="strand" evidence="28">
    <location>
        <begin position="122"/>
        <end position="124"/>
    </location>
</feature>
<feature type="strand" evidence="28">
    <location>
        <begin position="128"/>
        <end position="136"/>
    </location>
</feature>
<feature type="helix" evidence="28">
    <location>
        <begin position="138"/>
        <end position="140"/>
    </location>
</feature>
<feature type="helix" evidence="28">
    <location>
        <begin position="141"/>
        <end position="157"/>
    </location>
</feature>
<feature type="strand" evidence="28">
    <location>
        <begin position="166"/>
        <end position="172"/>
    </location>
</feature>
<feature type="strand" evidence="28">
    <location>
        <begin position="174"/>
        <end position="177"/>
    </location>
</feature>
<feature type="strand" evidence="28">
    <location>
        <begin position="180"/>
        <end position="186"/>
    </location>
</feature>
<feature type="strand" evidence="28">
    <location>
        <begin position="193"/>
        <end position="200"/>
    </location>
</feature>
<feature type="strand" evidence="28">
    <location>
        <begin position="202"/>
        <end position="207"/>
    </location>
</feature>
<feature type="strand" evidence="28">
    <location>
        <begin position="211"/>
        <end position="218"/>
    </location>
</feature>
<feature type="strand" evidence="28">
    <location>
        <begin position="225"/>
        <end position="230"/>
    </location>
</feature>
<feature type="turn" evidence="28">
    <location>
        <begin position="231"/>
        <end position="233"/>
    </location>
</feature>
<feature type="strand" evidence="28">
    <location>
        <begin position="236"/>
        <end position="240"/>
    </location>
</feature>
<feature type="strand" evidence="28">
    <location>
        <begin position="246"/>
        <end position="251"/>
    </location>
</feature>
<feature type="strand" evidence="28">
    <location>
        <begin position="255"/>
        <end position="262"/>
    </location>
</feature>
<feature type="strand" evidence="28">
    <location>
        <begin position="269"/>
        <end position="274"/>
    </location>
</feature>
<feature type="turn" evidence="28">
    <location>
        <begin position="275"/>
        <end position="277"/>
    </location>
</feature>
<feature type="strand" evidence="28">
    <location>
        <begin position="280"/>
        <end position="282"/>
    </location>
</feature>
<feature type="strand" evidence="27">
    <location>
        <begin position="286"/>
        <end position="288"/>
    </location>
</feature>
<feature type="strand" evidence="28">
    <location>
        <begin position="290"/>
        <end position="295"/>
    </location>
</feature>
<feature type="strand" evidence="28">
    <location>
        <begin position="299"/>
        <end position="306"/>
    </location>
</feature>
<feature type="strand" evidence="28">
    <location>
        <begin position="313"/>
        <end position="318"/>
    </location>
</feature>
<feature type="strand" evidence="28">
    <location>
        <begin position="330"/>
        <end position="339"/>
    </location>
</feature>
<feature type="strand" evidence="28">
    <location>
        <begin position="343"/>
        <end position="351"/>
    </location>
</feature>
<feature type="strand" evidence="28">
    <location>
        <begin position="356"/>
        <end position="362"/>
    </location>
</feature>
<feature type="turn" evidence="28">
    <location>
        <begin position="363"/>
        <end position="365"/>
    </location>
</feature>
<feature type="strand" evidence="28">
    <location>
        <begin position="368"/>
        <end position="370"/>
    </location>
</feature>
<feature type="strand" evidence="28">
    <location>
        <begin position="374"/>
        <end position="376"/>
    </location>
</feature>
<feature type="strand" evidence="28">
    <location>
        <begin position="378"/>
        <end position="382"/>
    </location>
</feature>
<feature type="strand" evidence="28">
    <location>
        <begin position="386"/>
        <end position="395"/>
    </location>
</feature>
<feature type="strand" evidence="28">
    <location>
        <begin position="398"/>
        <end position="405"/>
    </location>
</feature>
<feature type="strand" evidence="28">
    <location>
        <begin position="411"/>
        <end position="413"/>
    </location>
</feature>
<feature type="strand" evidence="28">
    <location>
        <begin position="417"/>
        <end position="426"/>
    </location>
</feature>
<proteinExistence type="evidence at protein level"/>
<sequence>MKQALRVAFGFLILWASVLHAEVRIVIDSGVDSGRPIGVVPFQWAGPGAAPEDIGGIVAADLRNSGKFNPLDRARLPQQPGSAQEVQPAAWSALGIDAVVVGQVTPNPDGSYNVAYQLVDTGGAPGTVLAQNSYKVNKQWLRYAGHTASDEVFEKLTGIKGAFRTRIAYVVQTNGGQFPYELRVSDYDGYNQFVVHRSPQPLMSPAWSPDGSKLAYVTFESGRSALVIQTLANGAVRQVASFPRHNGAPAFSPDGSKLAFALSKTGSLNLYVMDLASGQIRQVTDGRSNNTEPTWFPDSQNLAFTSDQAGRPQVYKVNINGGAPQRITWEGSQNQDADVSSDGKFMVMVSSNGGQQHIAKQDLATGGVQVLSSTFLDETPSLAPNGTMVIYSSSQGMGSVLNLVSTDGRFKARLPATDGQVKFPAWSPYL</sequence>
<name>TOLB_ECOLI</name>
<protein>
    <recommendedName>
        <fullName evidence="1 17">Tol-Pal system protein TolB</fullName>
    </recommendedName>
</protein>
<reference key="1">
    <citation type="journal article" date="1989" name="J. Bacteriol.">
        <title>Nucleotide sequences of the tolA and tolB genes and localization of their products, components of a multistep translocation system in Escherichia coli.</title>
        <authorList>
            <person name="Levengood S.K."/>
            <person name="Webster R.E."/>
        </authorList>
    </citation>
    <scope>NUCLEOTIDE SEQUENCE [GENOMIC DNA]</scope>
    <scope>FUNCTION</scope>
    <scope>SUBCELLULAR LOCATION</scope>
    <source>
        <strain>K12 / JM105 / ATCC 47016</strain>
    </source>
</reference>
<reference key="2">
    <citation type="journal article" date="1996" name="DNA Res.">
        <title>A 718-kb DNA sequence of the Escherichia coli K-12 genome corresponding to the 12.7-28.0 min region on the linkage map.</title>
        <authorList>
            <person name="Oshima T."/>
            <person name="Aiba H."/>
            <person name="Baba T."/>
            <person name="Fujita K."/>
            <person name="Hayashi K."/>
            <person name="Honjo A."/>
            <person name="Ikemoto K."/>
            <person name="Inada T."/>
            <person name="Itoh T."/>
            <person name="Kajihara M."/>
            <person name="Kanai K."/>
            <person name="Kashimoto K."/>
            <person name="Kimura S."/>
            <person name="Kitagawa M."/>
            <person name="Makino K."/>
            <person name="Masuda S."/>
            <person name="Miki T."/>
            <person name="Mizobuchi K."/>
            <person name="Mori H."/>
            <person name="Motomura K."/>
            <person name="Nakamura Y."/>
            <person name="Nashimoto H."/>
            <person name="Nishio Y."/>
            <person name="Saito N."/>
            <person name="Sampei G."/>
            <person name="Seki Y."/>
            <person name="Tagami H."/>
            <person name="Takemoto K."/>
            <person name="Wada C."/>
            <person name="Yamamoto Y."/>
            <person name="Yano M."/>
            <person name="Horiuchi T."/>
        </authorList>
    </citation>
    <scope>NUCLEOTIDE SEQUENCE [LARGE SCALE GENOMIC DNA]</scope>
    <source>
        <strain>K12 / W3110 / ATCC 27325 / DSM 5911</strain>
    </source>
</reference>
<reference key="3">
    <citation type="journal article" date="1997" name="Science">
        <title>The complete genome sequence of Escherichia coli K-12.</title>
        <authorList>
            <person name="Blattner F.R."/>
            <person name="Plunkett G. III"/>
            <person name="Bloch C.A."/>
            <person name="Perna N.T."/>
            <person name="Burland V."/>
            <person name="Riley M."/>
            <person name="Collado-Vides J."/>
            <person name="Glasner J.D."/>
            <person name="Rode C.K."/>
            <person name="Mayhew G.F."/>
            <person name="Gregor J."/>
            <person name="Davis N.W."/>
            <person name="Kirkpatrick H.A."/>
            <person name="Goeden M.A."/>
            <person name="Rose D.J."/>
            <person name="Mau B."/>
            <person name="Shao Y."/>
        </authorList>
    </citation>
    <scope>NUCLEOTIDE SEQUENCE [LARGE SCALE GENOMIC DNA]</scope>
    <source>
        <strain>K12 / MG1655 / ATCC 47076</strain>
    </source>
</reference>
<reference key="4">
    <citation type="journal article" date="2006" name="Mol. Syst. Biol.">
        <title>Highly accurate genome sequences of Escherichia coli K-12 strains MG1655 and W3110.</title>
        <authorList>
            <person name="Hayashi K."/>
            <person name="Morooka N."/>
            <person name="Yamamoto Y."/>
            <person name="Fujita K."/>
            <person name="Isono K."/>
            <person name="Choi S."/>
            <person name="Ohtsubo E."/>
            <person name="Baba T."/>
            <person name="Wanner B.L."/>
            <person name="Mori H."/>
            <person name="Horiuchi T."/>
        </authorList>
    </citation>
    <scope>NUCLEOTIDE SEQUENCE [LARGE SCALE GENOMIC DNA]</scope>
    <source>
        <strain>K12 / W3110 / ATCC 27325 / DSM 5911</strain>
    </source>
</reference>
<reference key="5">
    <citation type="journal article" date="1992" name="Mol. Microbiol.">
        <title>The excC gene of Escherichia coli K-12 required for cell envelope integrity encodes the peptidoglycan-associated lipoprotein (PAL).</title>
        <authorList>
            <person name="Lazzaroni J.-C."/>
            <person name="Portalier R."/>
        </authorList>
    </citation>
    <scope>NUCLEOTIDE SEQUENCE [GENOMIC DNA] OF 419-430</scope>
    <source>
        <strain>K12</strain>
    </source>
</reference>
<reference key="6">
    <citation type="journal article" date="1994" name="J. Bacteriol.">
        <title>Maturation and localization of the TolB protein required for colicin import.</title>
        <authorList>
            <person name="Isnard M."/>
            <person name="Rigal A."/>
            <person name="Lazzaroni J.-C."/>
            <person name="Lazdunski C."/>
            <person name="Lloubes R."/>
        </authorList>
    </citation>
    <scope>PROTEIN SEQUENCE OF 22-27</scope>
    <scope>FUNCTION</scope>
    <scope>SUBCELLULAR LOCATION</scope>
</reference>
<reference key="7">
    <citation type="submission" date="1996-02" db="UniProtKB">
        <authorList>
            <person name="Frutiger S."/>
            <person name="Hughes G.J."/>
            <person name="Pasquali C."/>
            <person name="Hochstrasser D.F."/>
        </authorList>
    </citation>
    <scope>PROTEIN SEQUENCE OF 22-32</scope>
    <source>
        <strain>K12 / W3110 / ATCC 27325 / DSM 5911</strain>
    </source>
</reference>
<reference key="8">
    <citation type="journal article" date="1995" name="J. Biol. Chem.">
        <title>Peptidoglycan-associated lipoprotein-TolB interaction. A possible key to explaining the formation of contact sites between the inner and outer membranes of Escherichia coli.</title>
        <authorList>
            <person name="Bouveret E."/>
            <person name="Derouiche R."/>
            <person name="Rigal A."/>
            <person name="Lloubes R."/>
            <person name="Lazdunski C."/>
            <person name="Benedetti H."/>
        </authorList>
    </citation>
    <scope>INTERACTION WITH PAL</scope>
    <scope>SUBCELLULAR LOCATION</scope>
</reference>
<reference key="9">
    <citation type="journal article" date="1997" name="J. Bacteriol.">
        <title>The TolB protein interacts with the porins of Escherichia coli.</title>
        <authorList>
            <person name="Rigal A."/>
            <person name="Bouveret E."/>
            <person name="Lloubes R."/>
            <person name="Lazdunski C."/>
            <person name="Benedetti H."/>
        </authorList>
    </citation>
    <scope>INTERACTION WITH PORINS</scope>
</reference>
<reference key="10">
    <citation type="journal article" date="1998" name="Mol. Microbiol.">
        <title>TolB protein of Escherichia coli K-12 interacts with the outer membrane peptidoglycan-associated proteins Pal, Lpp and OmpA.</title>
        <authorList>
            <person name="Clavel T."/>
            <person name="Germon P."/>
            <person name="Vianney A."/>
            <person name="Portalier R."/>
            <person name="Lazzaroni J.-C."/>
        </authorList>
    </citation>
    <scope>INTERACTION WITH PAL; LPP AND OMPA</scope>
</reference>
<reference key="11">
    <citation type="journal article" date="2002" name="Mol. Microbiol.">
        <title>The Tol/Pal system function requires an interaction between the C-terminal domain of TolA and the N-terminal domain of TolB.</title>
        <authorList>
            <person name="Walburger A."/>
            <person name="Lazdunski C."/>
            <person name="Corda Y."/>
        </authorList>
    </citation>
    <scope>FUNCTION</scope>
    <scope>SUBUNIT</scope>
    <scope>INTERACTION WITH TOLA</scope>
</reference>
<reference key="12">
    <citation type="journal article" date="2007" name="Mol. Microbiol.">
        <title>The trans-envelope Tol-Pal complex is part of the cell division machinery and required for proper outer-membrane invagination during cell constriction in E. coli.</title>
        <authorList>
            <person name="Gerding M.A."/>
            <person name="Ogata Y."/>
            <person name="Pecora N.D."/>
            <person name="Niki H."/>
            <person name="de Boer P.A."/>
        </authorList>
    </citation>
    <scope>FUNCTION</scope>
    <scope>SUBUNIT</scope>
    <scope>SUBCELLULAR LOCATION</scope>
    <scope>DISRUPTION PHENOTYPE</scope>
    <source>
        <strain>K12 / MG1655 / ATCC 47076</strain>
    </source>
</reference>
<reference key="13">
    <citation type="journal article" date="2014" name="Mol. Microbiol.">
        <title>Polar localization of Escherichia coli chemoreceptors requires an intact Tol-Pal complex.</title>
        <authorList>
            <person name="Santos T.M."/>
            <person name="Lin T.Y."/>
            <person name="Rajendran M."/>
            <person name="Anderson S.M."/>
            <person name="Weibel D.B."/>
        </authorList>
    </citation>
    <scope>FUNCTION</scope>
</reference>
<reference key="14">
    <citation type="journal article" date="2020" name="Proc. Natl. Acad. Sci. U.S.A.">
        <title>The Tol-Pal system is required for peptidoglycan-cleaving enzymes to complete bacterial cell division.</title>
        <authorList>
            <person name="Yakhnina A.A."/>
            <person name="Bernhardt T.G."/>
        </authorList>
    </citation>
    <scope>FUNCTION</scope>
    <scope>DISRUPTION PHENOTYPE</scope>
</reference>
<reference key="15">
    <citation type="journal article" date="1998" name="Acta Crystallogr. D">
        <title>Crystallization and preliminary crystallographic study of a component of the Escherichia coli Tol system: TolB.</title>
        <authorList>
            <person name="Abergel C."/>
            <person name="Rigal A."/>
            <person name="Chenivesse S."/>
            <person name="Lazdunski C."/>
            <person name="Claverie J.-M."/>
            <person name="Bouveret E."/>
            <person name="Benedetti H."/>
        </authorList>
    </citation>
    <scope>CRYSTALLIZATION</scope>
</reference>
<reference evidence="23" key="16">
    <citation type="journal article" date="1999" name="Structure">
        <title>Structure of the Escherichia coli TolB protein determined by MAD methods at 1.95-A resolution.</title>
        <authorList>
            <person name="Abergel C."/>
            <person name="Bouveret E."/>
            <person name="Claverie J.-M."/>
            <person name="Brown K."/>
            <person name="Rigal A."/>
            <person name="Lazdunski C."/>
            <person name="Benedetti H."/>
        </authorList>
    </citation>
    <scope>X-RAY CRYSTALLOGRAPHY (1.95 ANGSTROMS)</scope>
</reference>
<reference evidence="22" key="17">
    <citation type="journal article" date="2000" name="Structure">
        <title>The structure of TolB, an essential component of the tol-dependent translocation system, and its protein-protein interaction with the translocation domain of colicin E9.</title>
        <authorList>
            <person name="Carr S."/>
            <person name="Penfold C.N."/>
            <person name="Bamford V."/>
            <person name="James R."/>
            <person name="Hemmings A.M."/>
        </authorList>
    </citation>
    <scope>X-RAY CRYSTALLOGRAPHY (2.00 ANGSTROMS)</scope>
    <scope>INTERACTION WITH COLICIN E9</scope>
</reference>
<reference evidence="25" key="18">
    <citation type="journal article" date="2006" name="Proc. Natl. Acad. Sci. U.S.A.">
        <title>Competitive recruitment of the periplasmic translocation portal TolB by a natively disordered domain of colicin E9.</title>
        <authorList>
            <person name="Loftus S.R."/>
            <person name="Walker D."/>
            <person name="Mate M.J."/>
            <person name="Bonsor D.A."/>
            <person name="James R."/>
            <person name="Moore G.R."/>
            <person name="Kleanthous C."/>
        </authorList>
    </citation>
    <scope>X-RAY CRYSTALLOGRAPHY (2.00 ANGSTROMS) IN COMPLEX WITH COLICIN E9</scope>
</reference>
<reference evidence="24" key="19">
    <citation type="journal article" date="2007" name="J. Am. Chem. Soc.">
        <title>Molecular mimicry enables competitive recruitment by a natively disordered protein.</title>
        <authorList>
            <person name="Bonsor D.A."/>
            <person name="Grishkovskaya I."/>
            <person name="Dodson E.J."/>
            <person name="Kleanthous C."/>
        </authorList>
    </citation>
    <scope>X-RAY CRYSTALLOGRAPHY (1.50 ANGSTROMS) OF 23-430 IN COMPLEX WITH PAL</scope>
</reference>
<reference evidence="26" key="20">
    <citation type="journal article" date="2009" name="EMBO J.">
        <title>Allosteric beta-propeller signalling in TolB and its manipulation by translocating colicins.</title>
        <authorList>
            <person name="Bonsor D.A."/>
            <person name="Hecht O."/>
            <person name="Vankemmelbeke M."/>
            <person name="Sharma A."/>
            <person name="Krachler A.M."/>
            <person name="Housden N.G."/>
            <person name="Lilly K.J."/>
            <person name="James R."/>
            <person name="Moore G.R."/>
            <person name="Kleanthous C."/>
        </authorList>
    </citation>
    <scope>X-RAY CRYSTALLOGRAPHY (1.86 ANGSTROMS) OF 22-430 IN COMPLEX WITH PAL</scope>
    <scope>FUNCTION</scope>
    <scope>DOMAIN</scope>
</reference>
<comment type="function">
    <text evidence="3 5 7 8 10 20 21">Part of the Tol-Pal system, which plays a role in outer membrane invagination during cell division and is important for maintaining outer membrane integrity (PubMed:17233825). TolB occupies a key intermediary position in the Tol-Pal system because it communicates directly with both membrane-embedded components, Pal in the outer membrane and TolA in the inner membrane (PubMed:19696740). The Tol-Pal system is also required for polar localization of chemoreceptors clusters (PubMed:24720726). The system also appears to be required for the activity of several outer membrane-localized enzymes with cell wall remodeling activity (PubMed:32152098). Is involved in the uptake of some colicins A (PubMed:11994151, PubMed:2687247, PubMed:7929011).</text>
</comment>
<comment type="subunit">
    <text evidence="2 3 4 6 7 11 13 14 18">The Tol-Pal system is composed of five core proteins: the inner membrane proteins TolA, TolQ and TolR, the periplasmic protein TolB and the outer membrane protein Pal. They form a network linking the inner and outer membranes and the peptidoglycan layer (PubMed:17233825). TolB forms homodimers (PubMed:11994151). Interacts with the peptidoglycan-associated lipoprotein Pal and with the C-terminal region of TolA (PubMed:11994151, PubMed:17375930, PubMed:19696740, PubMed:7744736). Interacts with the trimeric porins OmpF, OmpC, PhoE and LamB (PubMed:9393690). Can form a complex with Pal, Lpp and OmpA (PubMed:9701827). Interacts with colicin E9 (PubMed:10673426, PubMed:16894158).</text>
</comment>
<comment type="interaction">
    <interactant intactId="EBI-7180728">
        <id>P0A855</id>
    </interactant>
    <interactant intactId="EBI-1124760">
        <id>P0A912</id>
        <label>pal</label>
    </interactant>
    <organismsDiffer>false</organismsDiffer>
    <experiments>4</experiments>
</comment>
<comment type="interaction">
    <interactant intactId="EBI-7180728">
        <id>P0A855</id>
    </interactant>
    <interactant intactId="EBI-1120026">
        <id>P19934</id>
        <label>tolA</label>
    </interactant>
    <organismsDiffer>false</organismsDiffer>
    <experiments>5</experiments>
</comment>
<comment type="interaction">
    <interactant intactId="EBI-7180728">
        <id>P0A855</id>
    </interactant>
    <interactant intactId="EBI-1029888">
        <id>P09883</id>
        <label>col</label>
    </interactant>
    <organismsDiffer>true</organismsDiffer>
    <experiments>9</experiments>
</comment>
<comment type="subcellular location">
    <subcellularLocation>
        <location evidence="1 9 12">Periplasm</location>
    </subcellularLocation>
    <text evidence="5 11">Partially associated with the outer membrane through a specific interaction with Pal (PubMed:7744736). Accumulates at cell constriction sites. Recruitment to the division site is dependent on FtsN activity (PubMed:17233825).</text>
</comment>
<comment type="domain">
    <text evidence="7">Effector proteins that bind to TolB can both negatively (Pal) and positively (colicin E9) regulate association of the distal N-terminal TolA box with TolA by influencing the conformational equilibrium experienced by these residues.</text>
</comment>
<comment type="disruption phenotype">
    <text evidence="5 10">Mutants lacking the tol-pal cluster suffer delayed outer membrane invagination and contain large outer membrane blebs at constriction sites and cell poles (PubMed:17233825). Tol-pal mutants fail to complete division and form cell chains, and fail to process denuded peptidoglycans at the septum (PubMed:32152098).</text>
</comment>
<comment type="similarity">
    <text evidence="1 17">Belongs to the TolB family.</text>
</comment>
<comment type="sequence caution" evidence="17">
    <conflict type="erroneous initiation">
        <sequence resource="EMBL-CDS" id="AAA24684"/>
    </conflict>
</comment>
<accession>P0A855</accession>
<accession>P19935</accession>
<dbReference type="EMBL" id="M28232">
    <property type="protein sequence ID" value="AAA24684.1"/>
    <property type="status" value="ALT_INIT"/>
    <property type="molecule type" value="Genomic_DNA"/>
</dbReference>
<dbReference type="EMBL" id="U00096">
    <property type="protein sequence ID" value="AAC73834.1"/>
    <property type="molecule type" value="Genomic_DNA"/>
</dbReference>
<dbReference type="EMBL" id="AP009048">
    <property type="protein sequence ID" value="BAA35406.2"/>
    <property type="molecule type" value="Genomic_DNA"/>
</dbReference>
<dbReference type="EMBL" id="X65796">
    <property type="protein sequence ID" value="CAA46672.1"/>
    <property type="molecule type" value="Genomic_DNA"/>
</dbReference>
<dbReference type="PIR" id="C64810">
    <property type="entry name" value="C64810"/>
</dbReference>
<dbReference type="RefSeq" id="NP_415268.1">
    <property type="nucleotide sequence ID" value="NC_000913.3"/>
</dbReference>
<dbReference type="RefSeq" id="WP_001295307.1">
    <property type="nucleotide sequence ID" value="NZ_STEB01000035.1"/>
</dbReference>
<dbReference type="PDB" id="1C5K">
    <property type="method" value="X-ray"/>
    <property type="resolution" value="2.00 A"/>
    <property type="chains" value="A=1-430"/>
</dbReference>
<dbReference type="PDB" id="1CRZ">
    <property type="method" value="X-ray"/>
    <property type="resolution" value="1.95 A"/>
    <property type="chains" value="A=28-430"/>
</dbReference>
<dbReference type="PDB" id="2HQS">
    <property type="method" value="X-ray"/>
    <property type="resolution" value="1.50 A"/>
    <property type="chains" value="A/B/D/F=23-430"/>
</dbReference>
<dbReference type="PDB" id="2IVZ">
    <property type="method" value="X-ray"/>
    <property type="resolution" value="2.00 A"/>
    <property type="chains" value="A/B/C/D=1-430"/>
</dbReference>
<dbReference type="PDB" id="2W8B">
    <property type="method" value="X-ray"/>
    <property type="resolution" value="1.86 A"/>
    <property type="chains" value="A/B/D/F=22-430"/>
</dbReference>
<dbReference type="PDB" id="3IAX">
    <property type="method" value="X-ray"/>
    <property type="resolution" value="2.60 A"/>
    <property type="chains" value="A=1-430"/>
</dbReference>
<dbReference type="PDB" id="7NST">
    <property type="method" value="EM"/>
    <property type="resolution" value="3.70 A"/>
    <property type="chains" value="E=1-430"/>
</dbReference>
<dbReference type="PDB" id="7NSU">
    <property type="method" value="EM"/>
    <property type="resolution" value="4.70 A"/>
    <property type="chains" value="E=1-430"/>
</dbReference>
<dbReference type="PDBsum" id="1C5K"/>
<dbReference type="PDBsum" id="1CRZ"/>
<dbReference type="PDBsum" id="2HQS"/>
<dbReference type="PDBsum" id="2IVZ"/>
<dbReference type="PDBsum" id="2W8B"/>
<dbReference type="PDBsum" id="3IAX"/>
<dbReference type="PDBsum" id="7NST"/>
<dbReference type="PDBsum" id="7NSU"/>
<dbReference type="EMDB" id="EMD-2372"/>
<dbReference type="SMR" id="P0A855"/>
<dbReference type="BioGRID" id="4261828">
    <property type="interactions" value="397"/>
</dbReference>
<dbReference type="BioGRID" id="849803">
    <property type="interactions" value="7"/>
</dbReference>
<dbReference type="ComplexPortal" id="CPX-5782">
    <property type="entry name" value="Tol-Pal cell envelope complex"/>
</dbReference>
<dbReference type="DIP" id="DIP-48262N"/>
<dbReference type="FunCoup" id="P0A855">
    <property type="interactions" value="78"/>
</dbReference>
<dbReference type="IntAct" id="P0A855">
    <property type="interactions" value="11"/>
</dbReference>
<dbReference type="MINT" id="P0A855"/>
<dbReference type="STRING" id="511145.b0740"/>
<dbReference type="TCDB" id="2.C.1.2.1">
    <property type="family name" value="the tonb-exbb-exbd/tola-tolq-tolr outer membrane receptor energizers and stabilizers (tonb/tola) family"/>
</dbReference>
<dbReference type="jPOST" id="P0A855"/>
<dbReference type="PaxDb" id="511145-b0740"/>
<dbReference type="EnsemblBacteria" id="AAC73834">
    <property type="protein sequence ID" value="AAC73834"/>
    <property type="gene ID" value="b0740"/>
</dbReference>
<dbReference type="GeneID" id="93776744"/>
<dbReference type="GeneID" id="945429"/>
<dbReference type="KEGG" id="ecj:JW5100"/>
<dbReference type="KEGG" id="eco:b0740"/>
<dbReference type="KEGG" id="ecoc:C3026_03715"/>
<dbReference type="PATRIC" id="fig|1411691.4.peg.1532"/>
<dbReference type="EchoBASE" id="EB1001"/>
<dbReference type="eggNOG" id="COG0823">
    <property type="taxonomic scope" value="Bacteria"/>
</dbReference>
<dbReference type="HOGENOM" id="CLU_047123_0_0_6"/>
<dbReference type="InParanoid" id="P0A855"/>
<dbReference type="OMA" id="VREPSWG"/>
<dbReference type="OrthoDB" id="9802240at2"/>
<dbReference type="PhylomeDB" id="P0A855"/>
<dbReference type="BioCyc" id="EcoCyc:EG11008-MONOMER"/>
<dbReference type="BioCyc" id="MetaCyc:EG11008-MONOMER"/>
<dbReference type="EvolutionaryTrace" id="P0A855"/>
<dbReference type="PRO" id="PR:P0A855"/>
<dbReference type="Proteomes" id="UP000000625">
    <property type="component" value="Chromosome"/>
</dbReference>
<dbReference type="GO" id="GO:0032153">
    <property type="term" value="C:cell division site"/>
    <property type="evidence" value="ECO:0000314"/>
    <property type="project" value="EcoCyc"/>
</dbReference>
<dbReference type="GO" id="GO:0016020">
    <property type="term" value="C:membrane"/>
    <property type="evidence" value="ECO:0000303"/>
    <property type="project" value="ComplexPortal"/>
</dbReference>
<dbReference type="GO" id="GO:0030288">
    <property type="term" value="C:outer membrane-bounded periplasmic space"/>
    <property type="evidence" value="ECO:0000314"/>
    <property type="project" value="EcoCyc"/>
</dbReference>
<dbReference type="GO" id="GO:0042597">
    <property type="term" value="C:periplasmic space"/>
    <property type="evidence" value="ECO:0000314"/>
    <property type="project" value="EcoliWiki"/>
</dbReference>
<dbReference type="GO" id="GO:0032991">
    <property type="term" value="C:protein-containing complex"/>
    <property type="evidence" value="ECO:0000314"/>
    <property type="project" value="CAFA"/>
</dbReference>
<dbReference type="GO" id="GO:0019904">
    <property type="term" value="F:protein domain specific binding"/>
    <property type="evidence" value="ECO:0000353"/>
    <property type="project" value="CAFA"/>
</dbReference>
<dbReference type="GO" id="GO:0044877">
    <property type="term" value="F:protein-containing complex binding"/>
    <property type="evidence" value="ECO:0000314"/>
    <property type="project" value="CAFA"/>
</dbReference>
<dbReference type="GO" id="GO:0043213">
    <property type="term" value="P:bacteriocin transport"/>
    <property type="evidence" value="ECO:0000315"/>
    <property type="project" value="EcoliWiki"/>
</dbReference>
<dbReference type="GO" id="GO:0051301">
    <property type="term" value="P:cell division"/>
    <property type="evidence" value="ECO:0000269"/>
    <property type="project" value="EcoCyc"/>
</dbReference>
<dbReference type="GO" id="GO:0090529">
    <property type="term" value="P:cell septum assembly"/>
    <property type="evidence" value="ECO:0000269"/>
    <property type="project" value="EcoCyc"/>
</dbReference>
<dbReference type="GO" id="GO:0071237">
    <property type="term" value="P:cellular response to bacteriocin"/>
    <property type="evidence" value="ECO:0000314"/>
    <property type="project" value="EcoCyc"/>
</dbReference>
<dbReference type="GO" id="GO:0017038">
    <property type="term" value="P:protein import"/>
    <property type="evidence" value="ECO:0000315"/>
    <property type="project" value="EcoliWiki"/>
</dbReference>
<dbReference type="GO" id="GO:0015031">
    <property type="term" value="P:protein transport"/>
    <property type="evidence" value="ECO:0000315"/>
    <property type="project" value="EcoliWiki"/>
</dbReference>
<dbReference type="GO" id="GO:1905153">
    <property type="term" value="P:regulation of membrane invagination"/>
    <property type="evidence" value="ECO:0000303"/>
    <property type="project" value="ComplexPortal"/>
</dbReference>
<dbReference type="FunFam" id="2.120.10.30:FF:000022">
    <property type="entry name" value="Tol-Pal system protein TolB"/>
    <property type="match status" value="1"/>
</dbReference>
<dbReference type="FunFam" id="3.40.50.10070:FF:000001">
    <property type="entry name" value="Tol-Pal system protein TolB"/>
    <property type="match status" value="1"/>
</dbReference>
<dbReference type="Gene3D" id="2.120.10.30">
    <property type="entry name" value="TolB, C-terminal domain"/>
    <property type="match status" value="1"/>
</dbReference>
<dbReference type="Gene3D" id="3.40.50.10070">
    <property type="entry name" value="TolB, N-terminal domain"/>
    <property type="match status" value="1"/>
</dbReference>
<dbReference type="HAMAP" id="MF_00671">
    <property type="entry name" value="TolB"/>
    <property type="match status" value="1"/>
</dbReference>
<dbReference type="InterPro" id="IPR011042">
    <property type="entry name" value="6-blade_b-propeller_TolB-like"/>
</dbReference>
<dbReference type="InterPro" id="IPR011659">
    <property type="entry name" value="PD40"/>
</dbReference>
<dbReference type="InterPro" id="IPR014167">
    <property type="entry name" value="Tol-Pal_TolB"/>
</dbReference>
<dbReference type="InterPro" id="IPR007195">
    <property type="entry name" value="TolB_N"/>
</dbReference>
<dbReference type="NCBIfam" id="TIGR02800">
    <property type="entry name" value="propeller_TolB"/>
    <property type="match status" value="1"/>
</dbReference>
<dbReference type="PANTHER" id="PTHR36842:SF1">
    <property type="entry name" value="PROTEIN TOLB"/>
    <property type="match status" value="1"/>
</dbReference>
<dbReference type="PANTHER" id="PTHR36842">
    <property type="entry name" value="PROTEIN TOLB HOMOLOG"/>
    <property type="match status" value="1"/>
</dbReference>
<dbReference type="Pfam" id="PF07676">
    <property type="entry name" value="PD40"/>
    <property type="match status" value="4"/>
</dbReference>
<dbReference type="Pfam" id="PF04052">
    <property type="entry name" value="TolB_N"/>
    <property type="match status" value="1"/>
</dbReference>
<dbReference type="SUPFAM" id="SSF52964">
    <property type="entry name" value="TolB, N-terminal domain"/>
    <property type="match status" value="1"/>
</dbReference>
<dbReference type="SUPFAM" id="SSF69304">
    <property type="entry name" value="Tricorn protease N-terminal domain"/>
    <property type="match status" value="1"/>
</dbReference>
<gene>
    <name evidence="1 16" type="primary">tolB</name>
    <name type="ordered locus">b0740</name>
    <name type="ordered locus">JW5100</name>
</gene>